<reference key="1">
    <citation type="journal article" date="2002" name="Proc. Natl. Acad. Sci. U.S.A.">
        <title>The Brucella suis genome reveals fundamental similarities between animal and plant pathogens and symbionts.</title>
        <authorList>
            <person name="Paulsen I.T."/>
            <person name="Seshadri R."/>
            <person name="Nelson K.E."/>
            <person name="Eisen J.A."/>
            <person name="Heidelberg J.F."/>
            <person name="Read T.D."/>
            <person name="Dodson R.J."/>
            <person name="Umayam L.A."/>
            <person name="Brinkac L.M."/>
            <person name="Beanan M.J."/>
            <person name="Daugherty S.C."/>
            <person name="DeBoy R.T."/>
            <person name="Durkin A.S."/>
            <person name="Kolonay J.F."/>
            <person name="Madupu R."/>
            <person name="Nelson W.C."/>
            <person name="Ayodeji B."/>
            <person name="Kraul M."/>
            <person name="Shetty J."/>
            <person name="Malek J.A."/>
            <person name="Van Aken S.E."/>
            <person name="Riedmuller S."/>
            <person name="Tettelin H."/>
            <person name="Gill S.R."/>
            <person name="White O."/>
            <person name="Salzberg S.L."/>
            <person name="Hoover D.L."/>
            <person name="Lindler L.E."/>
            <person name="Halling S.M."/>
            <person name="Boyle S.M."/>
            <person name="Fraser C.M."/>
        </authorList>
    </citation>
    <scope>NUCLEOTIDE SEQUENCE [LARGE SCALE GENOMIC DNA]</scope>
    <source>
        <strain>1330</strain>
    </source>
</reference>
<reference key="2">
    <citation type="journal article" date="2011" name="J. Bacteriol.">
        <title>Revised genome sequence of Brucella suis 1330.</title>
        <authorList>
            <person name="Tae H."/>
            <person name="Shallom S."/>
            <person name="Settlage R."/>
            <person name="Preston D."/>
            <person name="Adams L.G."/>
            <person name="Garner H.R."/>
        </authorList>
    </citation>
    <scope>NUCLEOTIDE SEQUENCE [LARGE SCALE GENOMIC DNA]</scope>
    <source>
        <strain>1330</strain>
    </source>
</reference>
<dbReference type="EC" id="2.1.1.228" evidence="1"/>
<dbReference type="EMBL" id="AE014291">
    <property type="protein sequence ID" value="AAN30806.1"/>
    <property type="molecule type" value="Genomic_DNA"/>
</dbReference>
<dbReference type="EMBL" id="CP002997">
    <property type="protein sequence ID" value="AEM19223.1"/>
    <property type="molecule type" value="Genomic_DNA"/>
</dbReference>
<dbReference type="RefSeq" id="WP_002964982.1">
    <property type="nucleotide sequence ID" value="NZ_KN046804.1"/>
</dbReference>
<dbReference type="SMR" id="Q8CY35"/>
<dbReference type="GeneID" id="97534799"/>
<dbReference type="KEGG" id="bms:BR1914"/>
<dbReference type="KEGG" id="bsi:BS1330_I1908"/>
<dbReference type="PATRIC" id="fig|204722.21.peg.2554"/>
<dbReference type="HOGENOM" id="CLU_047363_0_1_5"/>
<dbReference type="PhylomeDB" id="Q8CY35"/>
<dbReference type="Proteomes" id="UP000007104">
    <property type="component" value="Chromosome I"/>
</dbReference>
<dbReference type="GO" id="GO:0005829">
    <property type="term" value="C:cytosol"/>
    <property type="evidence" value="ECO:0007669"/>
    <property type="project" value="TreeGrafter"/>
</dbReference>
<dbReference type="GO" id="GO:0052906">
    <property type="term" value="F:tRNA (guanine(37)-N1)-methyltransferase activity"/>
    <property type="evidence" value="ECO:0007669"/>
    <property type="project" value="UniProtKB-UniRule"/>
</dbReference>
<dbReference type="GO" id="GO:0002939">
    <property type="term" value="P:tRNA N1-guanine methylation"/>
    <property type="evidence" value="ECO:0007669"/>
    <property type="project" value="TreeGrafter"/>
</dbReference>
<dbReference type="CDD" id="cd18080">
    <property type="entry name" value="TrmD-like"/>
    <property type="match status" value="1"/>
</dbReference>
<dbReference type="Gene3D" id="3.40.1280.10">
    <property type="match status" value="1"/>
</dbReference>
<dbReference type="Gene3D" id="1.10.1270.20">
    <property type="entry name" value="tRNA(m1g37)methyltransferase, domain 2"/>
    <property type="match status" value="1"/>
</dbReference>
<dbReference type="HAMAP" id="MF_00605">
    <property type="entry name" value="TrmD"/>
    <property type="match status" value="1"/>
</dbReference>
<dbReference type="InterPro" id="IPR029028">
    <property type="entry name" value="Alpha/beta_knot_MTases"/>
</dbReference>
<dbReference type="InterPro" id="IPR023148">
    <property type="entry name" value="tRNA_m1G_MeTrfase_C_sf"/>
</dbReference>
<dbReference type="InterPro" id="IPR002649">
    <property type="entry name" value="tRNA_m1G_MeTrfase_TrmD"/>
</dbReference>
<dbReference type="InterPro" id="IPR029026">
    <property type="entry name" value="tRNA_m1G_MTases_N"/>
</dbReference>
<dbReference type="InterPro" id="IPR016009">
    <property type="entry name" value="tRNA_MeTrfase_TRMD/TRM10"/>
</dbReference>
<dbReference type="NCBIfam" id="NF000648">
    <property type="entry name" value="PRK00026.1"/>
    <property type="match status" value="1"/>
</dbReference>
<dbReference type="NCBIfam" id="TIGR00088">
    <property type="entry name" value="trmD"/>
    <property type="match status" value="1"/>
</dbReference>
<dbReference type="PANTHER" id="PTHR46417">
    <property type="entry name" value="TRNA (GUANINE-N(1)-)-METHYLTRANSFERASE"/>
    <property type="match status" value="1"/>
</dbReference>
<dbReference type="PANTHER" id="PTHR46417:SF1">
    <property type="entry name" value="TRNA (GUANINE-N(1)-)-METHYLTRANSFERASE"/>
    <property type="match status" value="1"/>
</dbReference>
<dbReference type="Pfam" id="PF01746">
    <property type="entry name" value="tRNA_m1G_MT"/>
    <property type="match status" value="1"/>
</dbReference>
<dbReference type="PIRSF" id="PIRSF000386">
    <property type="entry name" value="tRNA_mtase"/>
    <property type="match status" value="1"/>
</dbReference>
<dbReference type="SUPFAM" id="SSF75217">
    <property type="entry name" value="alpha/beta knot"/>
    <property type="match status" value="1"/>
</dbReference>
<comment type="function">
    <text evidence="1">Specifically methylates guanosine-37 in various tRNAs.</text>
</comment>
<comment type="catalytic activity">
    <reaction evidence="1">
        <text>guanosine(37) in tRNA + S-adenosyl-L-methionine = N(1)-methylguanosine(37) in tRNA + S-adenosyl-L-homocysteine + H(+)</text>
        <dbReference type="Rhea" id="RHEA:36899"/>
        <dbReference type="Rhea" id="RHEA-COMP:10145"/>
        <dbReference type="Rhea" id="RHEA-COMP:10147"/>
        <dbReference type="ChEBI" id="CHEBI:15378"/>
        <dbReference type="ChEBI" id="CHEBI:57856"/>
        <dbReference type="ChEBI" id="CHEBI:59789"/>
        <dbReference type="ChEBI" id="CHEBI:73542"/>
        <dbReference type="ChEBI" id="CHEBI:74269"/>
        <dbReference type="EC" id="2.1.1.228"/>
    </reaction>
</comment>
<comment type="subunit">
    <text evidence="1">Homodimer.</text>
</comment>
<comment type="subcellular location">
    <subcellularLocation>
        <location evidence="1">Cytoplasm</location>
    </subcellularLocation>
</comment>
<comment type="similarity">
    <text evidence="1">Belongs to the RNA methyltransferase TrmD family.</text>
</comment>
<feature type="chain" id="PRO_0000060344" description="tRNA (guanine-N(1)-)-methyltransferase">
    <location>
        <begin position="1"/>
        <end position="244"/>
    </location>
</feature>
<feature type="binding site" evidence="1">
    <location>
        <position position="120"/>
    </location>
    <ligand>
        <name>S-adenosyl-L-methionine</name>
        <dbReference type="ChEBI" id="CHEBI:59789"/>
    </ligand>
</feature>
<feature type="binding site" evidence="1">
    <location>
        <begin position="140"/>
        <end position="145"/>
    </location>
    <ligand>
        <name>S-adenosyl-L-methionine</name>
        <dbReference type="ChEBI" id="CHEBI:59789"/>
    </ligand>
</feature>
<accession>Q8CY35</accession>
<accession>G0K857</accession>
<gene>
    <name evidence="1" type="primary">trmD</name>
    <name type="ordered locus">BR1914</name>
    <name type="ordered locus">BS1330_I1908</name>
</gene>
<organism>
    <name type="scientific">Brucella suis biovar 1 (strain 1330)</name>
    <dbReference type="NCBI Taxonomy" id="204722"/>
    <lineage>
        <taxon>Bacteria</taxon>
        <taxon>Pseudomonadati</taxon>
        <taxon>Pseudomonadota</taxon>
        <taxon>Alphaproteobacteria</taxon>
        <taxon>Hyphomicrobiales</taxon>
        <taxon>Brucellaceae</taxon>
        <taxon>Brucella/Ochrobactrum group</taxon>
        <taxon>Brucella</taxon>
    </lineage>
</organism>
<proteinExistence type="inferred from homology"/>
<sequence length="244" mass="26827">MTDLPEKEGGRFHASVLTLYPEMFPGPLGISLAGKALAEGKWQLDTVQIRDFAEGRHRMVDDTPSGGGAGMVMKADVVARALDSVDDGRPMLLMTPRGKPLTQERVRALADGAGAIILCGRFEGVDERVIEGRNLEEISIGDYILSGGETAAIVLLDAVVRLLPGVMGNRESGETESFETGLLEHPHYTRPQEWEGRAIPDILTSGNHGAIDKWRLEQAERITRERRPDLWEAYCKNRRKIGGQ</sequence>
<protein>
    <recommendedName>
        <fullName evidence="1">tRNA (guanine-N(1)-)-methyltransferase</fullName>
        <ecNumber evidence="1">2.1.1.228</ecNumber>
    </recommendedName>
    <alternativeName>
        <fullName evidence="1">M1G-methyltransferase</fullName>
    </alternativeName>
    <alternativeName>
        <fullName evidence="1">tRNA [GM37] methyltransferase</fullName>
    </alternativeName>
</protein>
<evidence type="ECO:0000255" key="1">
    <source>
        <dbReference type="HAMAP-Rule" id="MF_00605"/>
    </source>
</evidence>
<name>TRMD_BRUSU</name>
<keyword id="KW-0963">Cytoplasm</keyword>
<keyword id="KW-0489">Methyltransferase</keyword>
<keyword id="KW-0949">S-adenosyl-L-methionine</keyword>
<keyword id="KW-0808">Transferase</keyword>
<keyword id="KW-0819">tRNA processing</keyword>